<feature type="chain" id="PRO_0000339151" description="Uncharacterized methyltransferase C1348.04">
    <location>
        <begin position="1"/>
        <end position="145"/>
    </location>
</feature>
<keyword id="KW-0489">Methyltransferase</keyword>
<keyword id="KW-1185">Reference proteome</keyword>
<keyword id="KW-0808">Transferase</keyword>
<organism>
    <name type="scientific">Schizosaccharomyces pombe (strain 972 / ATCC 24843)</name>
    <name type="common">Fission yeast</name>
    <dbReference type="NCBI Taxonomy" id="284812"/>
    <lineage>
        <taxon>Eukaryota</taxon>
        <taxon>Fungi</taxon>
        <taxon>Dikarya</taxon>
        <taxon>Ascomycota</taxon>
        <taxon>Taphrinomycotina</taxon>
        <taxon>Schizosaccharomycetes</taxon>
        <taxon>Schizosaccharomycetales</taxon>
        <taxon>Schizosaccharomycetaceae</taxon>
        <taxon>Schizosaccharomyces</taxon>
    </lineage>
</organism>
<name>YI44_SCHPO</name>
<proteinExistence type="inferred from homology"/>
<protein>
    <recommendedName>
        <fullName>Uncharacterized methyltransferase C1348.04</fullName>
        <ecNumber>2.1.1.-</ecNumber>
    </recommendedName>
</protein>
<dbReference type="EC" id="2.1.1.-"/>
<dbReference type="EMBL" id="CU329671">
    <property type="protein sequence ID" value="CAB94271.1"/>
    <property type="molecule type" value="Genomic_DNA"/>
</dbReference>
<dbReference type="RefSeq" id="NP_592766.1">
    <property type="nucleotide sequence ID" value="NM_001020929.2"/>
</dbReference>
<dbReference type="SMR" id="Q9P3V6"/>
<dbReference type="FunCoup" id="Q9P3V6">
    <property type="interactions" value="195"/>
</dbReference>
<dbReference type="STRING" id="284812.Q9P3V6"/>
<dbReference type="PaxDb" id="4896-SPBC1348.04.1"/>
<dbReference type="EnsemblFungi" id="SPBC1348.04.1">
    <property type="protein sequence ID" value="SPBC1348.04.1:pep"/>
    <property type="gene ID" value="SPBC1348.04"/>
</dbReference>
<dbReference type="KEGG" id="spo:2542944"/>
<dbReference type="PomBase" id="SPBC1348.04"/>
<dbReference type="VEuPathDB" id="FungiDB:SPBC1348.04"/>
<dbReference type="HOGENOM" id="CLU_1787942_0_0_1"/>
<dbReference type="InParanoid" id="Q9P3V6"/>
<dbReference type="PhylomeDB" id="Q9P3V6"/>
<dbReference type="PRO" id="PR:Q9P3V6"/>
<dbReference type="Proteomes" id="UP000002485">
    <property type="component" value="Chromosome II"/>
</dbReference>
<dbReference type="GO" id="GO:0005829">
    <property type="term" value="C:cytosol"/>
    <property type="evidence" value="ECO:0007005"/>
    <property type="project" value="PomBase"/>
</dbReference>
<dbReference type="GO" id="GO:0005634">
    <property type="term" value="C:nucleus"/>
    <property type="evidence" value="ECO:0007005"/>
    <property type="project" value="PomBase"/>
</dbReference>
<dbReference type="GO" id="GO:0008168">
    <property type="term" value="F:methyltransferase activity"/>
    <property type="evidence" value="ECO:0000318"/>
    <property type="project" value="GO_Central"/>
</dbReference>
<dbReference type="GO" id="GO:0032259">
    <property type="term" value="P:methylation"/>
    <property type="evidence" value="ECO:0007669"/>
    <property type="project" value="UniProtKB-KW"/>
</dbReference>
<dbReference type="CDD" id="cd02440">
    <property type="entry name" value="AdoMet_MTases"/>
    <property type="match status" value="1"/>
</dbReference>
<dbReference type="FunFam" id="3.40.50.150:FF:000850">
    <property type="entry name" value="Uncharacterized methyltransferase C977.03"/>
    <property type="match status" value="1"/>
</dbReference>
<dbReference type="Gene3D" id="3.40.50.150">
    <property type="entry name" value="Vaccinia Virus protein VP39"/>
    <property type="match status" value="1"/>
</dbReference>
<dbReference type="InterPro" id="IPR041698">
    <property type="entry name" value="Methyltransf_25"/>
</dbReference>
<dbReference type="InterPro" id="IPR029063">
    <property type="entry name" value="SAM-dependent_MTases_sf"/>
</dbReference>
<dbReference type="PANTHER" id="PTHR43464:SF23">
    <property type="entry name" value="JUVENILE HORMONE ACID O-METHYLTRANSFERASE"/>
    <property type="match status" value="1"/>
</dbReference>
<dbReference type="PANTHER" id="PTHR43464">
    <property type="entry name" value="METHYLTRANSFERASE"/>
    <property type="match status" value="1"/>
</dbReference>
<dbReference type="Pfam" id="PF13649">
    <property type="entry name" value="Methyltransf_25"/>
    <property type="match status" value="1"/>
</dbReference>
<dbReference type="SUPFAM" id="SSF53335">
    <property type="entry name" value="S-adenosyl-L-methionine-dependent methyltransferases"/>
    <property type="match status" value="1"/>
</dbReference>
<accession>Q9P3V6</accession>
<reference key="1">
    <citation type="journal article" date="2002" name="Nature">
        <title>The genome sequence of Schizosaccharomyces pombe.</title>
        <authorList>
            <person name="Wood V."/>
            <person name="Gwilliam R."/>
            <person name="Rajandream M.A."/>
            <person name="Lyne M.H."/>
            <person name="Lyne R."/>
            <person name="Stewart A."/>
            <person name="Sgouros J.G."/>
            <person name="Peat N."/>
            <person name="Hayles J."/>
            <person name="Baker S.G."/>
            <person name="Basham D."/>
            <person name="Bowman S."/>
            <person name="Brooks K."/>
            <person name="Brown D."/>
            <person name="Brown S."/>
            <person name="Chillingworth T."/>
            <person name="Churcher C.M."/>
            <person name="Collins M."/>
            <person name="Connor R."/>
            <person name="Cronin A."/>
            <person name="Davis P."/>
            <person name="Feltwell T."/>
            <person name="Fraser A."/>
            <person name="Gentles S."/>
            <person name="Goble A."/>
            <person name="Hamlin N."/>
            <person name="Harris D.E."/>
            <person name="Hidalgo J."/>
            <person name="Hodgson G."/>
            <person name="Holroyd S."/>
            <person name="Hornsby T."/>
            <person name="Howarth S."/>
            <person name="Huckle E.J."/>
            <person name="Hunt S."/>
            <person name="Jagels K."/>
            <person name="James K.D."/>
            <person name="Jones L."/>
            <person name="Jones M."/>
            <person name="Leather S."/>
            <person name="McDonald S."/>
            <person name="McLean J."/>
            <person name="Mooney P."/>
            <person name="Moule S."/>
            <person name="Mungall K.L."/>
            <person name="Murphy L.D."/>
            <person name="Niblett D."/>
            <person name="Odell C."/>
            <person name="Oliver K."/>
            <person name="O'Neil S."/>
            <person name="Pearson D."/>
            <person name="Quail M.A."/>
            <person name="Rabbinowitsch E."/>
            <person name="Rutherford K.M."/>
            <person name="Rutter S."/>
            <person name="Saunders D."/>
            <person name="Seeger K."/>
            <person name="Sharp S."/>
            <person name="Skelton J."/>
            <person name="Simmonds M.N."/>
            <person name="Squares R."/>
            <person name="Squares S."/>
            <person name="Stevens K."/>
            <person name="Taylor K."/>
            <person name="Taylor R.G."/>
            <person name="Tivey A."/>
            <person name="Walsh S.V."/>
            <person name="Warren T."/>
            <person name="Whitehead S."/>
            <person name="Woodward J.R."/>
            <person name="Volckaert G."/>
            <person name="Aert R."/>
            <person name="Robben J."/>
            <person name="Grymonprez B."/>
            <person name="Weltjens I."/>
            <person name="Vanstreels E."/>
            <person name="Rieger M."/>
            <person name="Schaefer M."/>
            <person name="Mueller-Auer S."/>
            <person name="Gabel C."/>
            <person name="Fuchs M."/>
            <person name="Duesterhoeft A."/>
            <person name="Fritzc C."/>
            <person name="Holzer E."/>
            <person name="Moestl D."/>
            <person name="Hilbert H."/>
            <person name="Borzym K."/>
            <person name="Langer I."/>
            <person name="Beck A."/>
            <person name="Lehrach H."/>
            <person name="Reinhardt R."/>
            <person name="Pohl T.M."/>
            <person name="Eger P."/>
            <person name="Zimmermann W."/>
            <person name="Wedler H."/>
            <person name="Wambutt R."/>
            <person name="Purnelle B."/>
            <person name="Goffeau A."/>
            <person name="Cadieu E."/>
            <person name="Dreano S."/>
            <person name="Gloux S."/>
            <person name="Lelaure V."/>
            <person name="Mottier S."/>
            <person name="Galibert F."/>
            <person name="Aves S.J."/>
            <person name="Xiang Z."/>
            <person name="Hunt C."/>
            <person name="Moore K."/>
            <person name="Hurst S.M."/>
            <person name="Lucas M."/>
            <person name="Rochet M."/>
            <person name="Gaillardin C."/>
            <person name="Tallada V.A."/>
            <person name="Garzon A."/>
            <person name="Thode G."/>
            <person name="Daga R.R."/>
            <person name="Cruzado L."/>
            <person name="Jimenez J."/>
            <person name="Sanchez M."/>
            <person name="del Rey F."/>
            <person name="Benito J."/>
            <person name="Dominguez A."/>
            <person name="Revuelta J.L."/>
            <person name="Moreno S."/>
            <person name="Armstrong J."/>
            <person name="Forsburg S.L."/>
            <person name="Cerutti L."/>
            <person name="Lowe T."/>
            <person name="McCombie W.R."/>
            <person name="Paulsen I."/>
            <person name="Potashkin J."/>
            <person name="Shpakovski G.V."/>
            <person name="Ussery D."/>
            <person name="Barrell B.G."/>
            <person name="Nurse P."/>
        </authorList>
    </citation>
    <scope>NUCLEOTIDE SEQUENCE [LARGE SCALE GENOMIC DNA]</scope>
    <source>
        <strain>972 / ATCC 24843</strain>
    </source>
</reference>
<gene>
    <name type="ORF">SPAC1348.04</name>
    <name type="ORF">SPBC1348.04</name>
</gene>
<comment type="function">
    <text evidence="1">Probable methyltransferase.</text>
</comment>
<comment type="similarity">
    <text evidence="2">Belongs to the methyltransferase superfamily.</text>
</comment>
<sequence>MNLVQLGKLHENVLDAGCEPNRNARYLASLGYKVVGIDISERAISKAIDKTSSEKSNVNFNQRDFSRLNEFKGHFDTVIDIGCFHSILNSDHEPYTASLSHICHSDSSVFLRAFSETNKSRYRRWQGHKRYSLALKRNNVKKLSL</sequence>
<evidence type="ECO:0000250" key="1"/>
<evidence type="ECO:0000305" key="2"/>